<dbReference type="EMBL" id="BT030509">
    <property type="protein sequence ID" value="ABQ12949.1"/>
    <property type="molecule type" value="mRNA"/>
</dbReference>
<dbReference type="EMBL" id="BC105420">
    <property type="protein sequence ID" value="AAI05421.1"/>
    <property type="molecule type" value="mRNA"/>
</dbReference>
<dbReference type="RefSeq" id="NP_001039543.1">
    <property type="nucleotide sequence ID" value="NM_001046078.2"/>
</dbReference>
<dbReference type="RefSeq" id="XP_005215783.1">
    <property type="nucleotide sequence ID" value="XM_005215726.5"/>
</dbReference>
<dbReference type="RefSeq" id="XP_015330064.1">
    <property type="nucleotide sequence ID" value="XM_015474578.3"/>
</dbReference>
<dbReference type="FunCoup" id="Q2KJB9">
    <property type="interactions" value="1821"/>
</dbReference>
<dbReference type="STRING" id="9913.ENSBTAP00000032954"/>
<dbReference type="PaxDb" id="9913-ENSBTAP00000032954"/>
<dbReference type="Ensembl" id="ENSBTAT00000033028.4">
    <property type="protein sequence ID" value="ENSBTAP00000032954.2"/>
    <property type="gene ID" value="ENSBTAG00000023989.4"/>
</dbReference>
<dbReference type="GeneID" id="511226"/>
<dbReference type="KEGG" id="bta:511226"/>
<dbReference type="CTD" id="84437"/>
<dbReference type="VEuPathDB" id="HostDB:ENSBTAG00000023989"/>
<dbReference type="VGNC" id="VGNC:54887">
    <property type="gene designation" value="MSANTD4"/>
</dbReference>
<dbReference type="eggNOG" id="ENOG502RGM9">
    <property type="taxonomic scope" value="Eukaryota"/>
</dbReference>
<dbReference type="GeneTree" id="ENSGT00440000039469"/>
<dbReference type="HOGENOM" id="CLU_066150_0_0_1"/>
<dbReference type="InParanoid" id="Q2KJB9"/>
<dbReference type="OMA" id="WLKANIK"/>
<dbReference type="OrthoDB" id="3066195at2759"/>
<dbReference type="TreeFam" id="TF330965"/>
<dbReference type="Proteomes" id="UP000009136">
    <property type="component" value="Chromosome 15"/>
</dbReference>
<dbReference type="Bgee" id="ENSBTAG00000023989">
    <property type="expression patterns" value="Expressed in oocyte and 107 other cell types or tissues"/>
</dbReference>
<dbReference type="GO" id="GO:0005634">
    <property type="term" value="C:nucleus"/>
    <property type="evidence" value="ECO:0007669"/>
    <property type="project" value="Ensembl"/>
</dbReference>
<dbReference type="InterPro" id="IPR026162">
    <property type="entry name" value="MSANTD4"/>
</dbReference>
<dbReference type="InterPro" id="IPR028002">
    <property type="entry name" value="Myb_DNA-bind_5"/>
</dbReference>
<dbReference type="PANTHER" id="PTHR21732">
    <property type="entry name" value="MYB/SANT-LIKE DNA-BINDING DOMAIN-CONTAINING PROTEIN 4"/>
    <property type="match status" value="1"/>
</dbReference>
<dbReference type="PANTHER" id="PTHR21732:SF0">
    <property type="entry name" value="MYB_SANT-LIKE DNA-BINDING DOMAIN-CONTAINING PROTEIN 4"/>
    <property type="match status" value="1"/>
</dbReference>
<dbReference type="Pfam" id="PF13873">
    <property type="entry name" value="Myb_DNA-bind_5"/>
    <property type="match status" value="1"/>
</dbReference>
<accession>Q2KJB9</accession>
<gene>
    <name type="primary">MSANTD4</name>
</gene>
<reference key="1">
    <citation type="journal article" date="2005" name="BMC Genomics">
        <title>Characterization of 954 bovine full-CDS cDNA sequences.</title>
        <authorList>
            <person name="Harhay G.P."/>
            <person name="Sonstegard T.S."/>
            <person name="Keele J.W."/>
            <person name="Heaton M.P."/>
            <person name="Clawson M.L."/>
            <person name="Snelling W.M."/>
            <person name="Wiedmann R.T."/>
            <person name="Van Tassell C.P."/>
            <person name="Smith T.P.L."/>
        </authorList>
    </citation>
    <scope>NUCLEOTIDE SEQUENCE [LARGE SCALE MRNA]</scope>
</reference>
<reference key="2">
    <citation type="submission" date="2005-09" db="EMBL/GenBank/DDBJ databases">
        <authorList>
            <consortium name="NIH - Mammalian Gene Collection (MGC) project"/>
        </authorList>
    </citation>
    <scope>NUCLEOTIDE SEQUENCE [LARGE SCALE MRNA]</scope>
    <source>
        <strain>Hereford</strain>
        <tissue>Hypothalamus</tissue>
    </source>
</reference>
<sequence>MKQLKRKRKSNFSVQETQTLLKEITKRKEVIFSKQLNTTINVMKRMAWEEIAQCVNAVGEGEQRTGTEVKRRYLDWRALMKRKKMKANIKLVGSGFPLPTSDLDDSLTEEIDEKIGFRSDTNFDWQNVADFRDAGGSLTEVKVEEEERDPQSPEFEIEEEEEMLSSVIPDSRRENELPDFPHIDEFFTLNSTPSRSAYDEPHLLVNIEKQKLELEKRRLDIEAERLQVEKERLQIEKERLRHLDMEHERLQLEKERLQIEREKLRLQIVNSEKPSLESELGQGEKSIHQPQDIETEKLKLERERLQLEKDRLQFLKFESEKLQIEKERLQVEKERLRIQKEGHLQ</sequence>
<organism>
    <name type="scientific">Bos taurus</name>
    <name type="common">Bovine</name>
    <dbReference type="NCBI Taxonomy" id="9913"/>
    <lineage>
        <taxon>Eukaryota</taxon>
        <taxon>Metazoa</taxon>
        <taxon>Chordata</taxon>
        <taxon>Craniata</taxon>
        <taxon>Vertebrata</taxon>
        <taxon>Euteleostomi</taxon>
        <taxon>Mammalia</taxon>
        <taxon>Eutheria</taxon>
        <taxon>Laurasiatheria</taxon>
        <taxon>Artiodactyla</taxon>
        <taxon>Ruminantia</taxon>
        <taxon>Pecora</taxon>
        <taxon>Bovidae</taxon>
        <taxon>Bovinae</taxon>
        <taxon>Bos</taxon>
    </lineage>
</organism>
<name>MSD4_BOVIN</name>
<protein>
    <recommendedName>
        <fullName>Myb/SANT-like DNA-binding domain-containing protein 4</fullName>
    </recommendedName>
</protein>
<keyword id="KW-0175">Coiled coil</keyword>
<keyword id="KW-1017">Isopeptide bond</keyword>
<keyword id="KW-0597">Phosphoprotein</keyword>
<keyword id="KW-1185">Reference proteome</keyword>
<keyword id="KW-0832">Ubl conjugation</keyword>
<evidence type="ECO:0000250" key="1">
    <source>
        <dbReference type="UniProtKB" id="Q501L3"/>
    </source>
</evidence>
<evidence type="ECO:0000250" key="2">
    <source>
        <dbReference type="UniProtKB" id="Q8NCY6"/>
    </source>
</evidence>
<evidence type="ECO:0000255" key="3"/>
<evidence type="ECO:0000256" key="4">
    <source>
        <dbReference type="SAM" id="MobiDB-lite"/>
    </source>
</evidence>
<feature type="chain" id="PRO_0000311829" description="Myb/SANT-like DNA-binding domain-containing protein 4">
    <location>
        <begin position="1"/>
        <end position="345"/>
    </location>
</feature>
<feature type="domain" description="Myb-like">
    <location>
        <begin position="4"/>
        <end position="77"/>
    </location>
</feature>
<feature type="region of interest" description="Disordered" evidence="4">
    <location>
        <begin position="141"/>
        <end position="160"/>
    </location>
</feature>
<feature type="coiled-coil region" evidence="3">
    <location>
        <begin position="203"/>
        <end position="345"/>
    </location>
</feature>
<feature type="modified residue" description="Phosphoserine" evidence="1">
    <location>
        <position position="106"/>
    </location>
</feature>
<feature type="modified residue" description="Phosphothreonine" evidence="2">
    <location>
        <position position="188"/>
    </location>
</feature>
<feature type="cross-link" description="Glycyl lysine isopeptide (Lys-Gly) (interchain with G-Cter in SUMO2)" evidence="2">
    <location>
        <position position="9"/>
    </location>
</feature>
<feature type="cross-link" description="Glycyl lysine isopeptide (Lys-Gly) (interchain with G-Cter in SUMO2)" evidence="2">
    <location>
        <position position="114"/>
    </location>
</feature>
<feature type="cross-link" description="Glycyl lysine isopeptide (Lys-Gly) (interchain with G-Cter in SUMO2)" evidence="2">
    <location>
        <position position="142"/>
    </location>
</feature>
<feature type="cross-link" description="Glycyl lysine isopeptide (Lys-Gly) (interchain with G-Cter in SUMO2)" evidence="2">
    <location>
        <position position="237"/>
    </location>
</feature>
<feature type="cross-link" description="Glycyl lysine isopeptide (Lys-Gly) (interchain with G-Cter in SUMO2)" evidence="2">
    <location>
        <position position="254"/>
    </location>
</feature>
<feature type="cross-link" description="Glycyl lysine isopeptide (Lys-Gly) (interchain with G-Cter in SUMO2)" evidence="2">
    <location>
        <position position="273"/>
    </location>
</feature>
<proteinExistence type="evidence at transcript level"/>